<comment type="function">
    <text evidence="1">Responsible for the release of ribosomes from messenger RNA at the termination of protein biosynthesis. May increase the efficiency of translation by recycling ribosomes from one round of translation to another.</text>
</comment>
<comment type="subcellular location">
    <subcellularLocation>
        <location evidence="1">Cytoplasm</location>
    </subcellularLocation>
</comment>
<comment type="similarity">
    <text evidence="1">Belongs to the RRF family.</text>
</comment>
<proteinExistence type="inferred from homology"/>
<feature type="chain" id="PRO_1000003214" description="Ribosome-recycling factor">
    <location>
        <begin position="1"/>
        <end position="185"/>
    </location>
</feature>
<gene>
    <name evidence="1" type="primary">frr</name>
    <name type="ordered locus">Saro_1372</name>
</gene>
<evidence type="ECO:0000255" key="1">
    <source>
        <dbReference type="HAMAP-Rule" id="MF_00040"/>
    </source>
</evidence>
<keyword id="KW-0963">Cytoplasm</keyword>
<keyword id="KW-0648">Protein biosynthesis</keyword>
<keyword id="KW-1185">Reference proteome</keyword>
<reference key="1">
    <citation type="submission" date="2006-01" db="EMBL/GenBank/DDBJ databases">
        <title>Complete sequence of Novosphingobium aromaticivorans DSM 12444.</title>
        <authorList>
            <consortium name="US DOE Joint Genome Institute"/>
            <person name="Copeland A."/>
            <person name="Lucas S."/>
            <person name="Lapidus A."/>
            <person name="Barry K."/>
            <person name="Detter J.C."/>
            <person name="Glavina T."/>
            <person name="Hammon N."/>
            <person name="Israni S."/>
            <person name="Pitluck S."/>
            <person name="Chain P."/>
            <person name="Malfatti S."/>
            <person name="Shin M."/>
            <person name="Vergez L."/>
            <person name="Schmutz J."/>
            <person name="Larimer F."/>
            <person name="Land M."/>
            <person name="Kyrpides N."/>
            <person name="Ivanova N."/>
            <person name="Fredrickson J."/>
            <person name="Balkwill D."/>
            <person name="Romine M.F."/>
            <person name="Richardson P."/>
        </authorList>
    </citation>
    <scope>NUCLEOTIDE SEQUENCE [LARGE SCALE GENOMIC DNA]</scope>
    <source>
        <strain>ATCC 700278 / DSM 12444 / CCUG 56034 / CIP 105152 / NBRC 16084 / F199</strain>
    </source>
</reference>
<organism>
    <name type="scientific">Novosphingobium aromaticivorans (strain ATCC 700278 / DSM 12444 / CCUG 56034 / CIP 105152 / NBRC 16084 / F199)</name>
    <dbReference type="NCBI Taxonomy" id="279238"/>
    <lineage>
        <taxon>Bacteria</taxon>
        <taxon>Pseudomonadati</taxon>
        <taxon>Pseudomonadota</taxon>
        <taxon>Alphaproteobacteria</taxon>
        <taxon>Sphingomonadales</taxon>
        <taxon>Sphingomonadaceae</taxon>
        <taxon>Novosphingobium</taxon>
    </lineage>
</organism>
<protein>
    <recommendedName>
        <fullName evidence="1">Ribosome-recycling factor</fullName>
        <shortName evidence="1">RRF</shortName>
    </recommendedName>
    <alternativeName>
        <fullName evidence="1">Ribosome-releasing factor</fullName>
    </alternativeName>
</protein>
<name>RRF_NOVAD</name>
<dbReference type="EMBL" id="CP000248">
    <property type="protein sequence ID" value="ABD25816.1"/>
    <property type="molecule type" value="Genomic_DNA"/>
</dbReference>
<dbReference type="RefSeq" id="WP_011445030.1">
    <property type="nucleotide sequence ID" value="NC_007794.1"/>
</dbReference>
<dbReference type="SMR" id="Q2G8K7"/>
<dbReference type="STRING" id="279238.Saro_1372"/>
<dbReference type="KEGG" id="nar:Saro_1372"/>
<dbReference type="eggNOG" id="COG0233">
    <property type="taxonomic scope" value="Bacteria"/>
</dbReference>
<dbReference type="HOGENOM" id="CLU_073981_2_0_5"/>
<dbReference type="Proteomes" id="UP000009134">
    <property type="component" value="Chromosome"/>
</dbReference>
<dbReference type="GO" id="GO:0005829">
    <property type="term" value="C:cytosol"/>
    <property type="evidence" value="ECO:0007669"/>
    <property type="project" value="GOC"/>
</dbReference>
<dbReference type="GO" id="GO:0043023">
    <property type="term" value="F:ribosomal large subunit binding"/>
    <property type="evidence" value="ECO:0007669"/>
    <property type="project" value="TreeGrafter"/>
</dbReference>
<dbReference type="GO" id="GO:0002184">
    <property type="term" value="P:cytoplasmic translational termination"/>
    <property type="evidence" value="ECO:0007669"/>
    <property type="project" value="TreeGrafter"/>
</dbReference>
<dbReference type="CDD" id="cd00520">
    <property type="entry name" value="RRF"/>
    <property type="match status" value="1"/>
</dbReference>
<dbReference type="FunFam" id="1.10.132.20:FF:000001">
    <property type="entry name" value="Ribosome-recycling factor"/>
    <property type="match status" value="1"/>
</dbReference>
<dbReference type="FunFam" id="3.30.1360.40:FF:000001">
    <property type="entry name" value="Ribosome-recycling factor"/>
    <property type="match status" value="1"/>
</dbReference>
<dbReference type="Gene3D" id="3.30.1360.40">
    <property type="match status" value="1"/>
</dbReference>
<dbReference type="Gene3D" id="1.10.132.20">
    <property type="entry name" value="Ribosome-recycling factor"/>
    <property type="match status" value="1"/>
</dbReference>
<dbReference type="HAMAP" id="MF_00040">
    <property type="entry name" value="RRF"/>
    <property type="match status" value="1"/>
</dbReference>
<dbReference type="InterPro" id="IPR002661">
    <property type="entry name" value="Ribosome_recyc_fac"/>
</dbReference>
<dbReference type="InterPro" id="IPR023584">
    <property type="entry name" value="Ribosome_recyc_fac_dom"/>
</dbReference>
<dbReference type="InterPro" id="IPR036191">
    <property type="entry name" value="RRF_sf"/>
</dbReference>
<dbReference type="NCBIfam" id="TIGR00496">
    <property type="entry name" value="frr"/>
    <property type="match status" value="1"/>
</dbReference>
<dbReference type="PANTHER" id="PTHR20982:SF3">
    <property type="entry name" value="MITOCHONDRIAL RIBOSOME RECYCLING FACTOR PSEUDO 1"/>
    <property type="match status" value="1"/>
</dbReference>
<dbReference type="PANTHER" id="PTHR20982">
    <property type="entry name" value="RIBOSOME RECYCLING FACTOR"/>
    <property type="match status" value="1"/>
</dbReference>
<dbReference type="Pfam" id="PF01765">
    <property type="entry name" value="RRF"/>
    <property type="match status" value="1"/>
</dbReference>
<dbReference type="SUPFAM" id="SSF55194">
    <property type="entry name" value="Ribosome recycling factor, RRF"/>
    <property type="match status" value="1"/>
</dbReference>
<sequence length="185" mass="20386">MAKYDKADLERRMKGAVESLRGDLSGLRTGRANTALLDPIVVEVYGSHMPLAQVATVSAPEPRLLSVQVWDKSNVTPVEKAIRSAGLGLNPISDGNTLRLPIPDLTEERRKELAKLASKYAENARIAIRNVRRDGMDALKADESKKEISEDERKRAETDLQKLTDDIIKQADEAAAAKEKEILGK</sequence>
<accession>Q2G8K7</accession>